<dbReference type="EMBL" id="CP000720">
    <property type="protein sequence ID" value="ABS46506.1"/>
    <property type="molecule type" value="Genomic_DNA"/>
</dbReference>
<dbReference type="RefSeq" id="WP_011192844.1">
    <property type="nucleotide sequence ID" value="NC_009708.1"/>
</dbReference>
<dbReference type="SMR" id="A7FFN3"/>
<dbReference type="GeneID" id="49785047"/>
<dbReference type="KEGG" id="ypi:YpsIP31758_1080"/>
<dbReference type="HOGENOM" id="CLU_095954_0_0_6"/>
<dbReference type="Proteomes" id="UP000002412">
    <property type="component" value="Chromosome"/>
</dbReference>
<dbReference type="GO" id="GO:0005737">
    <property type="term" value="C:cytoplasm"/>
    <property type="evidence" value="ECO:0007669"/>
    <property type="project" value="UniProtKB-SubCell"/>
</dbReference>
<dbReference type="GO" id="GO:0016151">
    <property type="term" value="F:nickel cation binding"/>
    <property type="evidence" value="ECO:0007669"/>
    <property type="project" value="UniProtKB-UniRule"/>
</dbReference>
<dbReference type="GO" id="GO:0051082">
    <property type="term" value="F:unfolded protein binding"/>
    <property type="evidence" value="ECO:0007669"/>
    <property type="project" value="UniProtKB-UniRule"/>
</dbReference>
<dbReference type="GO" id="GO:0006457">
    <property type="term" value="P:protein folding"/>
    <property type="evidence" value="ECO:0007669"/>
    <property type="project" value="InterPro"/>
</dbReference>
<dbReference type="CDD" id="cd00571">
    <property type="entry name" value="UreE"/>
    <property type="match status" value="1"/>
</dbReference>
<dbReference type="Gene3D" id="2.60.260.20">
    <property type="entry name" value="Urease metallochaperone UreE, N-terminal domain"/>
    <property type="match status" value="1"/>
</dbReference>
<dbReference type="HAMAP" id="MF_00822">
    <property type="entry name" value="UreE"/>
    <property type="match status" value="1"/>
</dbReference>
<dbReference type="InterPro" id="IPR012406">
    <property type="entry name" value="UreE"/>
</dbReference>
<dbReference type="InterPro" id="IPR004029">
    <property type="entry name" value="UreE_N"/>
</dbReference>
<dbReference type="InterPro" id="IPR036118">
    <property type="entry name" value="UreE_N_sf"/>
</dbReference>
<dbReference type="NCBIfam" id="NF009761">
    <property type="entry name" value="PRK13262.1"/>
    <property type="match status" value="1"/>
</dbReference>
<dbReference type="Pfam" id="PF02814">
    <property type="entry name" value="UreE_N"/>
    <property type="match status" value="1"/>
</dbReference>
<dbReference type="SMART" id="SM00988">
    <property type="entry name" value="UreE_N"/>
    <property type="match status" value="1"/>
</dbReference>
<dbReference type="SUPFAM" id="SSF69287">
    <property type="entry name" value="Urease metallochaperone UreE, N-terminal domain"/>
    <property type="match status" value="1"/>
</dbReference>
<sequence>MILIEHILGNVKKDPVWREKLKDATFDLLILDQREAQKSRCRKSSTQGLDLGISLDRNVVLADGDVLAWDEETNVAVVVQINLRDVMVIDLSELKSRSPDELIKTCFELGHALGNQHWKAVTKHNEVYVPLTVATTMMDSVMRTHGFQHLPFRFVKGAEILPLLTNSEARLLFGGAEDTDTHVHVASPLDEPHGSGLHIHGIHSHGEGHSHGDHDHDHSHSHGDHDHDHKH</sequence>
<evidence type="ECO:0000255" key="1">
    <source>
        <dbReference type="HAMAP-Rule" id="MF_00822"/>
    </source>
</evidence>
<evidence type="ECO:0000256" key="2">
    <source>
        <dbReference type="SAM" id="MobiDB-lite"/>
    </source>
</evidence>
<comment type="function">
    <text evidence="1">Involved in urease metallocenter assembly. Binds nickel. Probably functions as a nickel donor during metallocenter assembly.</text>
</comment>
<comment type="subcellular location">
    <subcellularLocation>
        <location evidence="1">Cytoplasm</location>
    </subcellularLocation>
</comment>
<comment type="similarity">
    <text evidence="1">Belongs to the UreE family.</text>
</comment>
<proteinExistence type="inferred from homology"/>
<name>UREE_YERP3</name>
<protein>
    <recommendedName>
        <fullName evidence="1">Urease accessory protein UreE</fullName>
    </recommendedName>
</protein>
<keyword id="KW-0143">Chaperone</keyword>
<keyword id="KW-0963">Cytoplasm</keyword>
<keyword id="KW-0533">Nickel</keyword>
<keyword id="KW-0996">Nickel insertion</keyword>
<accession>A7FFN3</accession>
<feature type="chain" id="PRO_1000062567" description="Urease accessory protein UreE">
    <location>
        <begin position="1"/>
        <end position="231"/>
    </location>
</feature>
<feature type="region of interest" description="Disordered" evidence="2">
    <location>
        <begin position="185"/>
        <end position="231"/>
    </location>
</feature>
<feature type="compositionally biased region" description="Basic and acidic residues" evidence="2">
    <location>
        <begin position="204"/>
        <end position="231"/>
    </location>
</feature>
<gene>
    <name evidence="1" type="primary">ureE</name>
    <name type="ordered locus">YpsIP31758_1080</name>
</gene>
<reference key="1">
    <citation type="journal article" date="2007" name="PLoS Genet.">
        <title>The complete genome sequence of Yersinia pseudotuberculosis IP31758, the causative agent of Far East scarlet-like fever.</title>
        <authorList>
            <person name="Eppinger M."/>
            <person name="Rosovitz M.J."/>
            <person name="Fricke W.F."/>
            <person name="Rasko D.A."/>
            <person name="Kokorina G."/>
            <person name="Fayolle C."/>
            <person name="Lindler L.E."/>
            <person name="Carniel E."/>
            <person name="Ravel J."/>
        </authorList>
    </citation>
    <scope>NUCLEOTIDE SEQUENCE [LARGE SCALE GENOMIC DNA]</scope>
    <source>
        <strain>IP 31758</strain>
    </source>
</reference>
<organism>
    <name type="scientific">Yersinia pseudotuberculosis serotype O:1b (strain IP 31758)</name>
    <dbReference type="NCBI Taxonomy" id="349747"/>
    <lineage>
        <taxon>Bacteria</taxon>
        <taxon>Pseudomonadati</taxon>
        <taxon>Pseudomonadota</taxon>
        <taxon>Gammaproteobacteria</taxon>
        <taxon>Enterobacterales</taxon>
        <taxon>Yersiniaceae</taxon>
        <taxon>Yersinia</taxon>
    </lineage>
</organism>